<protein>
    <recommendedName>
        <fullName evidence="5">Protein ORGAN SIZE RELATED 1</fullName>
    </recommendedName>
</protein>
<comment type="function">
    <text evidence="4">Together with ARGOS and ARL, regulates organ growth and final organ size. Promotes both cell expansion and proliferation-dependent organ growth, in an ANT-dependent manner.</text>
</comment>
<comment type="subcellular location">
    <subcellularLocation>
        <location evidence="2">Membrane</location>
        <topology evidence="3">Multi-pass membrane protein</topology>
    </subcellularLocation>
    <subcellularLocation>
        <location evidence="4">Endoplasmic reticulum</location>
    </subcellularLocation>
    <subcellularLocation>
        <location evidence="1">Nucleus</location>
    </subcellularLocation>
    <subcellularLocation>
        <location evidence="1">Cytoplasm</location>
    </subcellularLocation>
</comment>
<comment type="tissue specificity">
    <text evidence="4">Mostly expressed in flowers, and, to a lower extent, in leaves and cotyledons.</text>
</comment>
<comment type="developmental stage">
    <text evidence="4">Detected in leaf primordia. In leaves, present in the blade and the petiole, especially at the dispersed meristematic regions and the leaf margin. Accumulates in floral organs.</text>
</comment>
<comment type="induction">
    <text evidence="4">Induced by ethylene but repressed by abscisic acid (ABA) and epi-brassinolide (epi-BL) treatments.</text>
</comment>
<comment type="domain">
    <text evidence="4">The OSR domain is sufficient to promote organ growth.</text>
</comment>
<comment type="disruption phenotype">
    <text evidence="4">When associated with ARGOS disruption, reduction in organ size.</text>
</comment>
<comment type="similarity">
    <text evidence="6">Belongs to the plant organ size related (OSR) protein family.</text>
</comment>
<comment type="sequence caution" evidence="6">
    <conflict type="erroneous gene model prediction">
        <sequence resource="EMBL-CDS" id="AAC78548"/>
    </conflict>
</comment>
<gene>
    <name evidence="5" type="primary">OSR1</name>
    <name evidence="7" type="ordered locus">At2g41230</name>
    <name evidence="8" type="ORF">F13H10.22</name>
</gene>
<evidence type="ECO:0000250" key="1">
    <source>
        <dbReference type="UniProtKB" id="Q6NMD6"/>
    </source>
</evidence>
<evidence type="ECO:0000250" key="2">
    <source>
        <dbReference type="UniProtKB" id="Q7X6L2"/>
    </source>
</evidence>
<evidence type="ECO:0000255" key="3"/>
<evidence type="ECO:0000269" key="4">
    <source>
    </source>
</evidence>
<evidence type="ECO:0000303" key="5">
    <source>
    </source>
</evidence>
<evidence type="ECO:0000305" key="6"/>
<evidence type="ECO:0000312" key="7">
    <source>
        <dbReference type="Araport" id="AT2G41230"/>
    </source>
</evidence>
<evidence type="ECO:0000312" key="8">
    <source>
        <dbReference type="EMBL" id="AAC78548.1"/>
    </source>
</evidence>
<keyword id="KW-0963">Cytoplasm</keyword>
<keyword id="KW-0217">Developmental protein</keyword>
<keyword id="KW-0256">Endoplasmic reticulum</keyword>
<keyword id="KW-0472">Membrane</keyword>
<keyword id="KW-0539">Nucleus</keyword>
<keyword id="KW-1185">Reference proteome</keyword>
<keyword id="KW-0812">Transmembrane</keyword>
<keyword id="KW-1133">Transmembrane helix</keyword>
<proteinExistence type="evidence at transcript level"/>
<sequence length="88" mass="9628">MRVHDQRLRFDVTPKPMGLNGSSLITARSVALLLFLSLLLLILPPFLPPLPPPPATLLLLPLLLMILLIFLAFSPSNEPSLAVEPLDP</sequence>
<dbReference type="EMBL" id="AC005662">
    <property type="protein sequence ID" value="AAC78548.1"/>
    <property type="status" value="ALT_SEQ"/>
    <property type="molecule type" value="Genomic_DNA"/>
</dbReference>
<dbReference type="EMBL" id="CP002685">
    <property type="protein sequence ID" value="AEC09947.1"/>
    <property type="molecule type" value="Genomic_DNA"/>
</dbReference>
<dbReference type="EMBL" id="AY091149">
    <property type="protein sequence ID" value="AAM14097.1"/>
    <property type="molecule type" value="mRNA"/>
</dbReference>
<dbReference type="EMBL" id="BT020283">
    <property type="protein sequence ID" value="AAV84504.1"/>
    <property type="molecule type" value="mRNA"/>
</dbReference>
<dbReference type="EMBL" id="BT024631">
    <property type="protein sequence ID" value="ABD57456.1"/>
    <property type="molecule type" value="mRNA"/>
</dbReference>
<dbReference type="PIR" id="D84839">
    <property type="entry name" value="D84839"/>
</dbReference>
<dbReference type="RefSeq" id="NP_850348.1">
    <property type="nucleotide sequence ID" value="NM_180017.3"/>
</dbReference>
<dbReference type="BioGRID" id="4059">
    <property type="interactions" value="1"/>
</dbReference>
<dbReference type="FunCoup" id="Q8RWS1">
    <property type="interactions" value="15"/>
</dbReference>
<dbReference type="STRING" id="3702.Q8RWS1"/>
<dbReference type="PaxDb" id="3702-AT2G41230.1"/>
<dbReference type="EnsemblPlants" id="AT2G41230.1">
    <property type="protein sequence ID" value="AT2G41230.1"/>
    <property type="gene ID" value="AT2G41230"/>
</dbReference>
<dbReference type="GeneID" id="818722"/>
<dbReference type="Gramene" id="AT2G41230.1">
    <property type="protein sequence ID" value="AT2G41230.1"/>
    <property type="gene ID" value="AT2G41230"/>
</dbReference>
<dbReference type="KEGG" id="ath:AT2G41230"/>
<dbReference type="Araport" id="AT2G41230"/>
<dbReference type="TAIR" id="AT2G41230">
    <property type="gene designation" value="OSR1"/>
</dbReference>
<dbReference type="HOGENOM" id="CLU_2472238_0_0_1"/>
<dbReference type="InParanoid" id="Q8RWS1"/>
<dbReference type="OMA" id="RVIFVMV"/>
<dbReference type="OrthoDB" id="1113320at2759"/>
<dbReference type="PRO" id="PR:Q8RWS1"/>
<dbReference type="Proteomes" id="UP000006548">
    <property type="component" value="Chromosome 2"/>
</dbReference>
<dbReference type="ExpressionAtlas" id="Q8RWS1">
    <property type="expression patterns" value="baseline and differential"/>
</dbReference>
<dbReference type="GO" id="GO:0005783">
    <property type="term" value="C:endoplasmic reticulum"/>
    <property type="evidence" value="ECO:0000314"/>
    <property type="project" value="TAIR"/>
</dbReference>
<dbReference type="GO" id="GO:0016020">
    <property type="term" value="C:membrane"/>
    <property type="evidence" value="ECO:0007669"/>
    <property type="project" value="UniProtKB-SubCell"/>
</dbReference>
<dbReference type="GO" id="GO:0005634">
    <property type="term" value="C:nucleus"/>
    <property type="evidence" value="ECO:0007669"/>
    <property type="project" value="UniProtKB-SubCell"/>
</dbReference>
<dbReference type="GO" id="GO:0071215">
    <property type="term" value="P:cellular response to abscisic acid stimulus"/>
    <property type="evidence" value="ECO:0000270"/>
    <property type="project" value="UniProtKB"/>
</dbReference>
<dbReference type="GO" id="GO:0071367">
    <property type="term" value="P:cellular response to brassinosteroid stimulus"/>
    <property type="evidence" value="ECO:0000270"/>
    <property type="project" value="UniProtKB"/>
</dbReference>
<dbReference type="GO" id="GO:0071369">
    <property type="term" value="P:cellular response to ethylene stimulus"/>
    <property type="evidence" value="ECO:0000270"/>
    <property type="project" value="UniProtKB"/>
</dbReference>
<dbReference type="GO" id="GO:0046622">
    <property type="term" value="P:positive regulation of organ growth"/>
    <property type="evidence" value="ECO:0007669"/>
    <property type="project" value="InterPro"/>
</dbReference>
<dbReference type="GO" id="GO:0090696">
    <property type="term" value="P:post-embryonic plant organ development"/>
    <property type="evidence" value="ECO:0000316"/>
    <property type="project" value="TAIR"/>
</dbReference>
<dbReference type="GO" id="GO:0051302">
    <property type="term" value="P:regulation of cell division"/>
    <property type="evidence" value="ECO:0000315"/>
    <property type="project" value="TAIR"/>
</dbReference>
<dbReference type="GO" id="GO:0001558">
    <property type="term" value="P:regulation of cell growth"/>
    <property type="evidence" value="ECO:0000315"/>
    <property type="project" value="TAIR"/>
</dbReference>
<dbReference type="GO" id="GO:0010104">
    <property type="term" value="P:regulation of ethylene-activated signaling pathway"/>
    <property type="evidence" value="ECO:0000315"/>
    <property type="project" value="TAIR"/>
</dbReference>
<dbReference type="GO" id="GO:2000070">
    <property type="term" value="P:regulation of response to water deprivation"/>
    <property type="evidence" value="ECO:0000315"/>
    <property type="project" value="TAIR"/>
</dbReference>
<dbReference type="InterPro" id="IPR037468">
    <property type="entry name" value="ARGOS/ARL/OSR1"/>
</dbReference>
<dbReference type="PANTHER" id="PTHR36023">
    <property type="entry name" value="ARGOS-LIKE PROTEIN"/>
    <property type="match status" value="1"/>
</dbReference>
<dbReference type="PANTHER" id="PTHR36023:SF9">
    <property type="entry name" value="PROTEIN ORGAN SIZE RELATED 1"/>
    <property type="match status" value="1"/>
</dbReference>
<name>ORS1_ARATH</name>
<reference key="1">
    <citation type="journal article" date="1999" name="Nature">
        <title>Sequence and analysis of chromosome 2 of the plant Arabidopsis thaliana.</title>
        <authorList>
            <person name="Lin X."/>
            <person name="Kaul S."/>
            <person name="Rounsley S.D."/>
            <person name="Shea T.P."/>
            <person name="Benito M.-I."/>
            <person name="Town C.D."/>
            <person name="Fujii C.Y."/>
            <person name="Mason T.M."/>
            <person name="Bowman C.L."/>
            <person name="Barnstead M.E."/>
            <person name="Feldblyum T.V."/>
            <person name="Buell C.R."/>
            <person name="Ketchum K.A."/>
            <person name="Lee J.J."/>
            <person name="Ronning C.M."/>
            <person name="Koo H.L."/>
            <person name="Moffat K.S."/>
            <person name="Cronin L.A."/>
            <person name="Shen M."/>
            <person name="Pai G."/>
            <person name="Van Aken S."/>
            <person name="Umayam L."/>
            <person name="Tallon L.J."/>
            <person name="Gill J.E."/>
            <person name="Adams M.D."/>
            <person name="Carrera A.J."/>
            <person name="Creasy T.H."/>
            <person name="Goodman H.M."/>
            <person name="Somerville C.R."/>
            <person name="Copenhaver G.P."/>
            <person name="Preuss D."/>
            <person name="Nierman W.C."/>
            <person name="White O."/>
            <person name="Eisen J.A."/>
            <person name="Salzberg S.L."/>
            <person name="Fraser C.M."/>
            <person name="Venter J.C."/>
        </authorList>
    </citation>
    <scope>NUCLEOTIDE SEQUENCE [LARGE SCALE GENOMIC DNA]</scope>
    <source>
        <strain>cv. Columbia</strain>
    </source>
</reference>
<reference key="2">
    <citation type="journal article" date="2017" name="Plant J.">
        <title>Araport11: a complete reannotation of the Arabidopsis thaliana reference genome.</title>
        <authorList>
            <person name="Cheng C.Y."/>
            <person name="Krishnakumar V."/>
            <person name="Chan A.P."/>
            <person name="Thibaud-Nissen F."/>
            <person name="Schobel S."/>
            <person name="Town C.D."/>
        </authorList>
    </citation>
    <scope>GENOME REANNOTATION</scope>
    <source>
        <strain>cv. Columbia</strain>
    </source>
</reference>
<reference key="3">
    <citation type="journal article" date="2003" name="Science">
        <title>Empirical analysis of transcriptional activity in the Arabidopsis genome.</title>
        <authorList>
            <person name="Yamada K."/>
            <person name="Lim J."/>
            <person name="Dale J.M."/>
            <person name="Chen H."/>
            <person name="Shinn P."/>
            <person name="Palm C.J."/>
            <person name="Southwick A.M."/>
            <person name="Wu H.C."/>
            <person name="Kim C.J."/>
            <person name="Nguyen M."/>
            <person name="Pham P.K."/>
            <person name="Cheuk R.F."/>
            <person name="Karlin-Newmann G."/>
            <person name="Liu S.X."/>
            <person name="Lam B."/>
            <person name="Sakano H."/>
            <person name="Wu T."/>
            <person name="Yu G."/>
            <person name="Miranda M."/>
            <person name="Quach H.L."/>
            <person name="Tripp M."/>
            <person name="Chang C.H."/>
            <person name="Lee J.M."/>
            <person name="Toriumi M.J."/>
            <person name="Chan M.M."/>
            <person name="Tang C.C."/>
            <person name="Onodera C.S."/>
            <person name="Deng J.M."/>
            <person name="Akiyama K."/>
            <person name="Ansari Y."/>
            <person name="Arakawa T."/>
            <person name="Banh J."/>
            <person name="Banno F."/>
            <person name="Bowser L."/>
            <person name="Brooks S.Y."/>
            <person name="Carninci P."/>
            <person name="Chao Q."/>
            <person name="Choy N."/>
            <person name="Enju A."/>
            <person name="Goldsmith A.D."/>
            <person name="Gurjal M."/>
            <person name="Hansen N.F."/>
            <person name="Hayashizaki Y."/>
            <person name="Johnson-Hopson C."/>
            <person name="Hsuan V.W."/>
            <person name="Iida K."/>
            <person name="Karnes M."/>
            <person name="Khan S."/>
            <person name="Koesema E."/>
            <person name="Ishida J."/>
            <person name="Jiang P.X."/>
            <person name="Jones T."/>
            <person name="Kawai J."/>
            <person name="Kamiya A."/>
            <person name="Meyers C."/>
            <person name="Nakajima M."/>
            <person name="Narusaka M."/>
            <person name="Seki M."/>
            <person name="Sakurai T."/>
            <person name="Satou M."/>
            <person name="Tamse R."/>
            <person name="Vaysberg M."/>
            <person name="Wallender E.K."/>
            <person name="Wong C."/>
            <person name="Yamamura Y."/>
            <person name="Yuan S."/>
            <person name="Shinozaki K."/>
            <person name="Davis R.W."/>
            <person name="Theologis A."/>
            <person name="Ecker J.R."/>
        </authorList>
    </citation>
    <scope>NUCLEOTIDE SEQUENCE [LARGE SCALE MRNA]</scope>
    <source>
        <strain>cv. Columbia</strain>
    </source>
</reference>
<reference key="4">
    <citation type="submission" date="2004-12" db="EMBL/GenBank/DDBJ databases">
        <title>Arabidopsis ORF clones.</title>
        <authorList>
            <person name="Cheuk R.F."/>
            <person name="Chen H."/>
            <person name="Kim C.J."/>
            <person name="Shinn P."/>
            <person name="Ecker J.R."/>
        </authorList>
    </citation>
    <scope>NUCLEOTIDE SEQUENCE [LARGE SCALE MRNA]</scope>
    <source>
        <strain>cv. Columbia</strain>
    </source>
</reference>
<reference key="5">
    <citation type="journal article" date="2011" name="New Phytol.">
        <title>Arabidopsis ORGAN SIZE RELATED1 regulates organ growth and final organ size in orchestration with ARGOS and ARL.</title>
        <authorList>
            <person name="Feng G."/>
            <person name="Qin Z."/>
            <person name="Yan J."/>
            <person name="Zhang X."/>
            <person name="Hu Y."/>
        </authorList>
    </citation>
    <scope>FUNCTION</scope>
    <scope>DISRUPTION PHENOTYPE</scope>
    <scope>TISSUE SPECIFICITY</scope>
    <scope>DEVELOPMENTAL STAGE</scope>
    <scope>SUBCELLULAR LOCATION</scope>
    <scope>OSR DOMAIN</scope>
    <scope>INDUCTION BY HORMONES</scope>
    <source>
        <strain>cv. Columbia</strain>
    </source>
</reference>
<accession>Q8RWS1</accession>
<accession>Q9ZVB4</accession>
<feature type="chain" id="PRO_0000423600" description="Protein ORGAN SIZE RELATED 1">
    <location>
        <begin position="1"/>
        <end position="88"/>
    </location>
</feature>
<feature type="transmembrane region" description="Helical" evidence="3">
    <location>
        <begin position="30"/>
        <end position="50"/>
    </location>
</feature>
<feature type="transmembrane region" description="Helical" evidence="3">
    <location>
        <begin position="53"/>
        <end position="73"/>
    </location>
</feature>
<feature type="region of interest" description="Organ Size Related (OSR) domain">
    <location>
        <begin position="25"/>
        <end position="76"/>
    </location>
</feature>
<organism>
    <name type="scientific">Arabidopsis thaliana</name>
    <name type="common">Mouse-ear cress</name>
    <dbReference type="NCBI Taxonomy" id="3702"/>
    <lineage>
        <taxon>Eukaryota</taxon>
        <taxon>Viridiplantae</taxon>
        <taxon>Streptophyta</taxon>
        <taxon>Embryophyta</taxon>
        <taxon>Tracheophyta</taxon>
        <taxon>Spermatophyta</taxon>
        <taxon>Magnoliopsida</taxon>
        <taxon>eudicotyledons</taxon>
        <taxon>Gunneridae</taxon>
        <taxon>Pentapetalae</taxon>
        <taxon>rosids</taxon>
        <taxon>malvids</taxon>
        <taxon>Brassicales</taxon>
        <taxon>Brassicaceae</taxon>
        <taxon>Camelineae</taxon>
        <taxon>Arabidopsis</taxon>
    </lineage>
</organism>